<organism>
    <name type="scientific">Geotalea daltonii (strain DSM 22248 / JCM 15807 / FRC-32)</name>
    <name type="common">Geobacter daltonii</name>
    <dbReference type="NCBI Taxonomy" id="316067"/>
    <lineage>
        <taxon>Bacteria</taxon>
        <taxon>Pseudomonadati</taxon>
        <taxon>Thermodesulfobacteriota</taxon>
        <taxon>Desulfuromonadia</taxon>
        <taxon>Geobacterales</taxon>
        <taxon>Geobacteraceae</taxon>
        <taxon>Geotalea</taxon>
    </lineage>
</organism>
<reference key="1">
    <citation type="submission" date="2009-01" db="EMBL/GenBank/DDBJ databases">
        <title>Complete sequence of Geobacter sp. FRC-32.</title>
        <authorList>
            <consortium name="US DOE Joint Genome Institute"/>
            <person name="Lucas S."/>
            <person name="Copeland A."/>
            <person name="Lapidus A."/>
            <person name="Glavina del Rio T."/>
            <person name="Dalin E."/>
            <person name="Tice H."/>
            <person name="Bruce D."/>
            <person name="Goodwin L."/>
            <person name="Pitluck S."/>
            <person name="Saunders E."/>
            <person name="Brettin T."/>
            <person name="Detter J.C."/>
            <person name="Han C."/>
            <person name="Larimer F."/>
            <person name="Land M."/>
            <person name="Hauser L."/>
            <person name="Kyrpides N."/>
            <person name="Ovchinnikova G."/>
            <person name="Kostka J."/>
            <person name="Richardson P."/>
        </authorList>
    </citation>
    <scope>NUCLEOTIDE SEQUENCE [LARGE SCALE GENOMIC DNA]</scope>
    <source>
        <strain>DSM 22248 / JCM 15807 / FRC-32</strain>
    </source>
</reference>
<name>UBIE_GEODF</name>
<proteinExistence type="inferred from homology"/>
<accession>B9LZA9</accession>
<feature type="chain" id="PRO_1000187770" description="Ubiquinone/menaquinone biosynthesis C-methyltransferase UbiE">
    <location>
        <begin position="1"/>
        <end position="235"/>
    </location>
</feature>
<feature type="binding site" evidence="1">
    <location>
        <position position="60"/>
    </location>
    <ligand>
        <name>S-adenosyl-L-methionine</name>
        <dbReference type="ChEBI" id="CHEBI:59789"/>
    </ligand>
</feature>
<feature type="binding site" evidence="1">
    <location>
        <position position="81"/>
    </location>
    <ligand>
        <name>S-adenosyl-L-methionine</name>
        <dbReference type="ChEBI" id="CHEBI:59789"/>
    </ligand>
</feature>
<gene>
    <name evidence="1" type="primary">ubiE</name>
    <name type="ordered locus">Geob_2308</name>
</gene>
<dbReference type="EC" id="2.1.1.163" evidence="1"/>
<dbReference type="EC" id="2.1.1.201" evidence="1"/>
<dbReference type="EMBL" id="CP001390">
    <property type="protein sequence ID" value="ACM20662.1"/>
    <property type="molecule type" value="Genomic_DNA"/>
</dbReference>
<dbReference type="RefSeq" id="WP_012647391.1">
    <property type="nucleotide sequence ID" value="NC_011979.1"/>
</dbReference>
<dbReference type="SMR" id="B9LZA9"/>
<dbReference type="STRING" id="316067.Geob_2308"/>
<dbReference type="KEGG" id="geo:Geob_2308"/>
<dbReference type="eggNOG" id="COG2226">
    <property type="taxonomic scope" value="Bacteria"/>
</dbReference>
<dbReference type="HOGENOM" id="CLU_037990_0_0_7"/>
<dbReference type="OrthoDB" id="9808140at2"/>
<dbReference type="UniPathway" id="UPA00079">
    <property type="reaction ID" value="UER00169"/>
</dbReference>
<dbReference type="UniPathway" id="UPA00232"/>
<dbReference type="Proteomes" id="UP000007721">
    <property type="component" value="Chromosome"/>
</dbReference>
<dbReference type="GO" id="GO:0008425">
    <property type="term" value="F:2-methoxy-6-polyprenyl-1,4-benzoquinol methyltransferase activity"/>
    <property type="evidence" value="ECO:0007669"/>
    <property type="project" value="UniProtKB-EC"/>
</dbReference>
<dbReference type="GO" id="GO:0043770">
    <property type="term" value="F:demethylmenaquinone methyltransferase activity"/>
    <property type="evidence" value="ECO:0007669"/>
    <property type="project" value="UniProtKB-UniRule"/>
</dbReference>
<dbReference type="GO" id="GO:0009234">
    <property type="term" value="P:menaquinone biosynthetic process"/>
    <property type="evidence" value="ECO:0007669"/>
    <property type="project" value="UniProtKB-UniRule"/>
</dbReference>
<dbReference type="GO" id="GO:0032259">
    <property type="term" value="P:methylation"/>
    <property type="evidence" value="ECO:0007669"/>
    <property type="project" value="UniProtKB-KW"/>
</dbReference>
<dbReference type="CDD" id="cd02440">
    <property type="entry name" value="AdoMet_MTases"/>
    <property type="match status" value="1"/>
</dbReference>
<dbReference type="Gene3D" id="3.40.50.150">
    <property type="entry name" value="Vaccinia Virus protein VP39"/>
    <property type="match status" value="1"/>
</dbReference>
<dbReference type="HAMAP" id="MF_01813">
    <property type="entry name" value="MenG_UbiE_methyltr"/>
    <property type="match status" value="1"/>
</dbReference>
<dbReference type="InterPro" id="IPR029063">
    <property type="entry name" value="SAM-dependent_MTases_sf"/>
</dbReference>
<dbReference type="InterPro" id="IPR004033">
    <property type="entry name" value="UbiE/COQ5_MeTrFase"/>
</dbReference>
<dbReference type="InterPro" id="IPR023576">
    <property type="entry name" value="UbiE/COQ5_MeTrFase_CS"/>
</dbReference>
<dbReference type="NCBIfam" id="TIGR01934">
    <property type="entry name" value="MenG_MenH_UbiE"/>
    <property type="match status" value="1"/>
</dbReference>
<dbReference type="NCBIfam" id="NF001244">
    <property type="entry name" value="PRK00216.1-5"/>
    <property type="match status" value="1"/>
</dbReference>
<dbReference type="PANTHER" id="PTHR43591:SF24">
    <property type="entry name" value="2-METHOXY-6-POLYPRENYL-1,4-BENZOQUINOL METHYLASE, MITOCHONDRIAL"/>
    <property type="match status" value="1"/>
</dbReference>
<dbReference type="PANTHER" id="PTHR43591">
    <property type="entry name" value="METHYLTRANSFERASE"/>
    <property type="match status" value="1"/>
</dbReference>
<dbReference type="Pfam" id="PF01209">
    <property type="entry name" value="Ubie_methyltran"/>
    <property type="match status" value="1"/>
</dbReference>
<dbReference type="SUPFAM" id="SSF53335">
    <property type="entry name" value="S-adenosyl-L-methionine-dependent methyltransferases"/>
    <property type="match status" value="1"/>
</dbReference>
<dbReference type="PROSITE" id="PS51608">
    <property type="entry name" value="SAM_MT_UBIE"/>
    <property type="match status" value="1"/>
</dbReference>
<dbReference type="PROSITE" id="PS01183">
    <property type="entry name" value="UBIE_1"/>
    <property type="match status" value="1"/>
</dbReference>
<dbReference type="PROSITE" id="PS01184">
    <property type="entry name" value="UBIE_2"/>
    <property type="match status" value="1"/>
</dbReference>
<keyword id="KW-0474">Menaquinone biosynthesis</keyword>
<keyword id="KW-0489">Methyltransferase</keyword>
<keyword id="KW-1185">Reference proteome</keyword>
<keyword id="KW-0949">S-adenosyl-L-methionine</keyword>
<keyword id="KW-0808">Transferase</keyword>
<keyword id="KW-0831">Ubiquinone biosynthesis</keyword>
<evidence type="ECO:0000255" key="1">
    <source>
        <dbReference type="HAMAP-Rule" id="MF_01813"/>
    </source>
</evidence>
<sequence>MFKLTEKGEKIQEMFDTIAPRYDFLNRVLSFGIDRSWRRFAVKKIKYAPNGRILDVATGTGDVALEIAARTPSSVSITGIDFSGEMVELGKQKVAASSYAGRINMQVAPCEDIPFADDSFDSITIAFGIRNVVDRSQGLKEMYRVLKPGGRVVILEFSTPRFVLFKHLYHFYFLKVLPVIGGLFSKFSAYKYLPDSVIEFPSQDQFKATMAGVGFKNTQHHDLTLGIATVYTGEK</sequence>
<comment type="function">
    <text evidence="1">Methyltransferase required for the conversion of demethylmenaquinol (DMKH2) to menaquinol (MKH2) and the conversion of 2-polyprenyl-6-methoxy-1,4-benzoquinol (DDMQH2) to 2-polyprenyl-3-methyl-6-methoxy-1,4-benzoquinol (DMQH2).</text>
</comment>
<comment type="catalytic activity">
    <reaction evidence="1">
        <text>a 2-demethylmenaquinol + S-adenosyl-L-methionine = a menaquinol + S-adenosyl-L-homocysteine + H(+)</text>
        <dbReference type="Rhea" id="RHEA:42640"/>
        <dbReference type="Rhea" id="RHEA-COMP:9539"/>
        <dbReference type="Rhea" id="RHEA-COMP:9563"/>
        <dbReference type="ChEBI" id="CHEBI:15378"/>
        <dbReference type="ChEBI" id="CHEBI:18151"/>
        <dbReference type="ChEBI" id="CHEBI:55437"/>
        <dbReference type="ChEBI" id="CHEBI:57856"/>
        <dbReference type="ChEBI" id="CHEBI:59789"/>
        <dbReference type="EC" id="2.1.1.163"/>
    </reaction>
</comment>
<comment type="catalytic activity">
    <reaction evidence="1">
        <text>a 2-methoxy-6-(all-trans-polyprenyl)benzene-1,4-diol + S-adenosyl-L-methionine = a 5-methoxy-2-methyl-3-(all-trans-polyprenyl)benzene-1,4-diol + S-adenosyl-L-homocysteine + H(+)</text>
        <dbReference type="Rhea" id="RHEA:28286"/>
        <dbReference type="Rhea" id="RHEA-COMP:10858"/>
        <dbReference type="Rhea" id="RHEA-COMP:10859"/>
        <dbReference type="ChEBI" id="CHEBI:15378"/>
        <dbReference type="ChEBI" id="CHEBI:57856"/>
        <dbReference type="ChEBI" id="CHEBI:59789"/>
        <dbReference type="ChEBI" id="CHEBI:84166"/>
        <dbReference type="ChEBI" id="CHEBI:84167"/>
        <dbReference type="EC" id="2.1.1.201"/>
    </reaction>
</comment>
<comment type="pathway">
    <text evidence="1">Quinol/quinone metabolism; menaquinone biosynthesis; menaquinol from 1,4-dihydroxy-2-naphthoate: step 2/2.</text>
</comment>
<comment type="pathway">
    <text evidence="1">Cofactor biosynthesis; ubiquinone biosynthesis.</text>
</comment>
<comment type="similarity">
    <text evidence="1">Belongs to the class I-like SAM-binding methyltransferase superfamily. MenG/UbiE family.</text>
</comment>
<protein>
    <recommendedName>
        <fullName evidence="1">Ubiquinone/menaquinone biosynthesis C-methyltransferase UbiE</fullName>
        <ecNumber evidence="1">2.1.1.163</ecNumber>
        <ecNumber evidence="1">2.1.1.201</ecNumber>
    </recommendedName>
    <alternativeName>
        <fullName evidence="1">2-methoxy-6-polyprenyl-1,4-benzoquinol methylase</fullName>
    </alternativeName>
    <alternativeName>
        <fullName evidence="1">Demethylmenaquinone methyltransferase</fullName>
    </alternativeName>
</protein>